<name>AFTR2_ALTAL</name>
<reference key="1">
    <citation type="journal article" date="2005" name="J. Gen. Plant Pathol.">
        <title>Structural analysis of cosmid clone pcAFT-2 carrying AFT10-1 encoding an acyl-CoA dehydrogenase involved in AF-toxin production in the strawberry pathotype of Alternaria alternata.</title>
        <authorList>
            <person name="Ruswandi S."/>
            <person name="Kitani K."/>
            <person name="Akimitsu K."/>
            <person name="Tsuge T."/>
            <person name="Shiraishi T."/>
            <person name="Yamamoto M."/>
        </authorList>
    </citation>
    <scope>NUCLEOTIDE SEQUENCE [GENOMIC DNA]</scope>
    <scope>FUNCTION</scope>
    <source>
        <strain>NAF8</strain>
    </source>
</reference>
<reference key="2">
    <citation type="journal article" date="2013" name="FEMS Microbiol. Rev.">
        <title>Host-selective toxins produced by the plant pathogenic fungus Alternaria alternata.</title>
        <authorList>
            <person name="Tsuge T."/>
            <person name="Harimoto Y."/>
            <person name="Akimitsu K."/>
            <person name="Ohtani K."/>
            <person name="Kodama M."/>
            <person name="Akagi Y."/>
            <person name="Egusa M."/>
            <person name="Yamamoto M."/>
            <person name="Otani H."/>
        </authorList>
    </citation>
    <scope>REVIEW ON HOST-SELECTIVE TOXINS</scope>
</reference>
<sequence length="444" mass="48701">MLQCAPKKNERLRGSCDFCTQSKLRCNKNKPSCRRCTLQQQPCVYSVARRTGRPPKHPRKANDCQEANGQHGDQDPVTSTPGGSYQQQSNHLLDVEGDGANFTLADASTTAQGRETAASPALDNALLVGETFGFSSLLDDPLIQSDDFFSFSLCMPPGEKEGHMASPRTLNGSTGPCSPTVLSSIDVPHLPARFGFLESSVESGLHGRTRPHLVEQPDKTVPSSFSEIEKIYDEGLTFSGLDSAINAVTNNGKGEPNISGTMAAHPHSKRQCFCSTSMSKLQMLVLHPTLCQKNSRARFDMALFLEEVVFSIYRDVLQCLVCQSKSLHSLASLCICTDWVIEALRDVAQDLSSGQDNLGGFRAGLYPPKDKFSICVGRFVLDDQLRESCTRSLVRYRLRKLIPIMDTMMKLNHRGAGGALSQAIRTMVEDVHHKIESALGMMEL</sequence>
<feature type="chain" id="PRO_0000444839" description="Transcription activator AFTR-2">
    <location>
        <begin position="1"/>
        <end position="444"/>
    </location>
</feature>
<feature type="DNA-binding region" description="Zn(2)-C6 fungal-type" evidence="1">
    <location>
        <begin position="16"/>
        <end position="43"/>
    </location>
</feature>
<feature type="region of interest" description="Disordered" evidence="2">
    <location>
        <begin position="49"/>
        <end position="88"/>
    </location>
</feature>
<feature type="compositionally biased region" description="Basic residues" evidence="2">
    <location>
        <begin position="50"/>
        <end position="59"/>
    </location>
</feature>
<feature type="compositionally biased region" description="Polar residues" evidence="2">
    <location>
        <begin position="76"/>
        <end position="88"/>
    </location>
</feature>
<keyword id="KW-0238">DNA-binding</keyword>
<keyword id="KW-0479">Metal-binding</keyword>
<keyword id="KW-0539">Nucleus</keyword>
<keyword id="KW-0804">Transcription</keyword>
<keyword id="KW-0805">Transcription regulation</keyword>
<keyword id="KW-0862">Zinc</keyword>
<organism>
    <name type="scientific">Alternaria alternata</name>
    <name type="common">Alternaria rot fungus</name>
    <name type="synonym">Torula alternata</name>
    <dbReference type="NCBI Taxonomy" id="5599"/>
    <lineage>
        <taxon>Eukaryota</taxon>
        <taxon>Fungi</taxon>
        <taxon>Dikarya</taxon>
        <taxon>Ascomycota</taxon>
        <taxon>Pezizomycotina</taxon>
        <taxon>Dothideomycetes</taxon>
        <taxon>Pleosporomycetidae</taxon>
        <taxon>Pleosporales</taxon>
        <taxon>Pleosporineae</taxon>
        <taxon>Pleosporaceae</taxon>
        <taxon>Alternaria</taxon>
        <taxon>Alternaria sect. Alternaria</taxon>
        <taxon>Alternaria alternata complex</taxon>
    </lineage>
</organism>
<gene>
    <name evidence="4" type="primary">AFTR-2</name>
</gene>
<evidence type="ECO:0000255" key="1">
    <source>
        <dbReference type="PROSITE-ProRule" id="PRU00227"/>
    </source>
</evidence>
<evidence type="ECO:0000256" key="2">
    <source>
        <dbReference type="SAM" id="MobiDB-lite"/>
    </source>
</evidence>
<evidence type="ECO:0000303" key="3">
    <source>
    </source>
</evidence>
<evidence type="ECO:0000303" key="4">
    <source ref="1"/>
</evidence>
<evidence type="ECO:0000305" key="5">
    <source ref="1"/>
</evidence>
<dbReference type="EMBL" id="AB179766">
    <property type="protein sequence ID" value="BAD97698.1"/>
    <property type="molecule type" value="Genomic_DNA"/>
</dbReference>
<dbReference type="SMR" id="Q50LF9"/>
<dbReference type="GO" id="GO:0005634">
    <property type="term" value="C:nucleus"/>
    <property type="evidence" value="ECO:0007669"/>
    <property type="project" value="UniProtKB-SubCell"/>
</dbReference>
<dbReference type="GO" id="GO:0003677">
    <property type="term" value="F:DNA binding"/>
    <property type="evidence" value="ECO:0007669"/>
    <property type="project" value="UniProtKB-KW"/>
</dbReference>
<dbReference type="GO" id="GO:0000981">
    <property type="term" value="F:DNA-binding transcription factor activity, RNA polymerase II-specific"/>
    <property type="evidence" value="ECO:0007669"/>
    <property type="project" value="InterPro"/>
</dbReference>
<dbReference type="GO" id="GO:0008270">
    <property type="term" value="F:zinc ion binding"/>
    <property type="evidence" value="ECO:0007669"/>
    <property type="project" value="InterPro"/>
</dbReference>
<dbReference type="CDD" id="cd00067">
    <property type="entry name" value="GAL4"/>
    <property type="match status" value="1"/>
</dbReference>
<dbReference type="Gene3D" id="4.10.240.10">
    <property type="entry name" value="Zn(2)-C6 fungal-type DNA-binding domain"/>
    <property type="match status" value="1"/>
</dbReference>
<dbReference type="InterPro" id="IPR050675">
    <property type="entry name" value="OAF3"/>
</dbReference>
<dbReference type="InterPro" id="IPR036864">
    <property type="entry name" value="Zn2-C6_fun-type_DNA-bd_sf"/>
</dbReference>
<dbReference type="InterPro" id="IPR001138">
    <property type="entry name" value="Zn2Cys6_DnaBD"/>
</dbReference>
<dbReference type="PANTHER" id="PTHR31069:SF31">
    <property type="entry name" value="MONODICTYPHENONE CLUSTER TRANSCRIPTION FACTOR-RELATED"/>
    <property type="match status" value="1"/>
</dbReference>
<dbReference type="PANTHER" id="PTHR31069">
    <property type="entry name" value="OLEATE-ACTIVATED TRANSCRIPTION FACTOR 1-RELATED"/>
    <property type="match status" value="1"/>
</dbReference>
<dbReference type="Pfam" id="PF00172">
    <property type="entry name" value="Zn_clus"/>
    <property type="match status" value="1"/>
</dbReference>
<dbReference type="PRINTS" id="PR00755">
    <property type="entry name" value="AFLATOXINBRP"/>
</dbReference>
<dbReference type="SMART" id="SM00066">
    <property type="entry name" value="GAL4"/>
    <property type="match status" value="1"/>
</dbReference>
<dbReference type="SUPFAM" id="SSF57701">
    <property type="entry name" value="Zn2/Cys6 DNA-binding domain"/>
    <property type="match status" value="1"/>
</dbReference>
<dbReference type="PROSITE" id="PS00463">
    <property type="entry name" value="ZN2_CY6_FUNGAL_1"/>
    <property type="match status" value="1"/>
</dbReference>
<dbReference type="PROSITE" id="PS50048">
    <property type="entry name" value="ZN2_CY6_FUNGAL_2"/>
    <property type="match status" value="1"/>
</dbReference>
<proteinExistence type="inferred from homology"/>
<accession>Q50LF9</accession>
<protein>
    <recommendedName>
        <fullName evidence="4">Transcription activator AFTR-2</fullName>
    </recommendedName>
    <alternativeName>
        <fullName evidence="4">ACT-toxin biosynthesis regulator 2</fullName>
    </alternativeName>
</protein>
<comment type="function">
    <text evidence="3 5">Transcription factor that regulates the expression of the gene clusters that mediate the biosynthesis of the host-selective toxins (HSTs) AF-toxins responsible for Alternaria black spot of strawberry disease by the strawberry pathotype (Probable). On cellular level, AF-toxins affect plasma membrane of susceptible cells and cause a sudden increase in loss of K(+) after a few minutes of toxin treatment (PubMed:22846083).</text>
</comment>
<comment type="subcellular location">
    <subcellularLocation>
        <location evidence="1">Nucleus</location>
    </subcellularLocation>
</comment>
<comment type="miscellaneous">
    <text evidence="5">Gene clusters encoding host-selective toxins (HSTs) are localized on conditionally dispensable chromosomes (CDCs), also called supernumerary chromosomes, where they are present in multiple copies (Probable). The CDCs are not essential for saprophytic growth but controls host-selective pathogenicity (Probable).</text>
</comment>